<organism>
    <name type="scientific">Pelobacter propionicus (strain DSM 2379 / NBRC 103807 / OttBd1)</name>
    <dbReference type="NCBI Taxonomy" id="338966"/>
    <lineage>
        <taxon>Bacteria</taxon>
        <taxon>Pseudomonadati</taxon>
        <taxon>Thermodesulfobacteriota</taxon>
        <taxon>Desulfuromonadia</taxon>
        <taxon>Desulfuromonadales</taxon>
        <taxon>Desulfuromonadaceae</taxon>
        <taxon>Pelobacter</taxon>
    </lineage>
</organism>
<name>RL31_PELPD</name>
<comment type="function">
    <text evidence="1">Binds the 23S rRNA.</text>
</comment>
<comment type="cofactor">
    <cofactor evidence="1">
        <name>Zn(2+)</name>
        <dbReference type="ChEBI" id="CHEBI:29105"/>
    </cofactor>
    <text evidence="1">Binds 1 zinc ion per subunit.</text>
</comment>
<comment type="subunit">
    <text evidence="1">Part of the 50S ribosomal subunit.</text>
</comment>
<comment type="similarity">
    <text evidence="1">Belongs to the bacterial ribosomal protein bL31 family. Type A subfamily.</text>
</comment>
<evidence type="ECO:0000255" key="1">
    <source>
        <dbReference type="HAMAP-Rule" id="MF_00501"/>
    </source>
</evidence>
<evidence type="ECO:0000305" key="2"/>
<reference key="1">
    <citation type="submission" date="2006-10" db="EMBL/GenBank/DDBJ databases">
        <title>Complete sequence of chromosome of Pelobacter propionicus DSM 2379.</title>
        <authorList>
            <consortium name="US DOE Joint Genome Institute"/>
            <person name="Copeland A."/>
            <person name="Lucas S."/>
            <person name="Lapidus A."/>
            <person name="Barry K."/>
            <person name="Detter J.C."/>
            <person name="Glavina del Rio T."/>
            <person name="Hammon N."/>
            <person name="Israni S."/>
            <person name="Dalin E."/>
            <person name="Tice H."/>
            <person name="Pitluck S."/>
            <person name="Saunders E."/>
            <person name="Brettin T."/>
            <person name="Bruce D."/>
            <person name="Han C."/>
            <person name="Tapia R."/>
            <person name="Schmutz J."/>
            <person name="Larimer F."/>
            <person name="Land M."/>
            <person name="Hauser L."/>
            <person name="Kyrpides N."/>
            <person name="Kim E."/>
            <person name="Lovley D."/>
            <person name="Richardson P."/>
        </authorList>
    </citation>
    <scope>NUCLEOTIDE SEQUENCE [LARGE SCALE GENOMIC DNA]</scope>
    <source>
        <strain>DSM 2379 / NBRC 103807 / OttBd1</strain>
    </source>
</reference>
<proteinExistence type="inferred from homology"/>
<feature type="chain" id="PRO_1000126682" description="Large ribosomal subunit protein bL31">
    <location>
        <begin position="1"/>
        <end position="66"/>
    </location>
</feature>
<feature type="binding site" evidence="1">
    <location>
        <position position="16"/>
    </location>
    <ligand>
        <name>Zn(2+)</name>
        <dbReference type="ChEBI" id="CHEBI:29105"/>
    </ligand>
</feature>
<feature type="binding site" evidence="1">
    <location>
        <position position="18"/>
    </location>
    <ligand>
        <name>Zn(2+)</name>
        <dbReference type="ChEBI" id="CHEBI:29105"/>
    </ligand>
</feature>
<feature type="binding site" evidence="1">
    <location>
        <position position="36"/>
    </location>
    <ligand>
        <name>Zn(2+)</name>
        <dbReference type="ChEBI" id="CHEBI:29105"/>
    </ligand>
</feature>
<feature type="binding site" evidence="1">
    <location>
        <position position="39"/>
    </location>
    <ligand>
        <name>Zn(2+)</name>
        <dbReference type="ChEBI" id="CHEBI:29105"/>
    </ligand>
</feature>
<protein>
    <recommendedName>
        <fullName evidence="1">Large ribosomal subunit protein bL31</fullName>
    </recommendedName>
    <alternativeName>
        <fullName evidence="2">50S ribosomal protein L31</fullName>
    </alternativeName>
</protein>
<dbReference type="EMBL" id="CP000482">
    <property type="protein sequence ID" value="ABL00255.1"/>
    <property type="molecule type" value="Genomic_DNA"/>
</dbReference>
<dbReference type="RefSeq" id="WP_011736507.1">
    <property type="nucleotide sequence ID" value="NC_008609.1"/>
</dbReference>
<dbReference type="SMR" id="A1ASD4"/>
<dbReference type="STRING" id="338966.Ppro_2650"/>
<dbReference type="KEGG" id="ppd:Ppro_2650"/>
<dbReference type="eggNOG" id="COG0254">
    <property type="taxonomic scope" value="Bacteria"/>
</dbReference>
<dbReference type="HOGENOM" id="CLU_114306_4_0_7"/>
<dbReference type="OrthoDB" id="9803251at2"/>
<dbReference type="Proteomes" id="UP000006732">
    <property type="component" value="Chromosome"/>
</dbReference>
<dbReference type="GO" id="GO:1990904">
    <property type="term" value="C:ribonucleoprotein complex"/>
    <property type="evidence" value="ECO:0007669"/>
    <property type="project" value="UniProtKB-KW"/>
</dbReference>
<dbReference type="GO" id="GO:0005840">
    <property type="term" value="C:ribosome"/>
    <property type="evidence" value="ECO:0007669"/>
    <property type="project" value="UniProtKB-KW"/>
</dbReference>
<dbReference type="GO" id="GO:0046872">
    <property type="term" value="F:metal ion binding"/>
    <property type="evidence" value="ECO:0007669"/>
    <property type="project" value="UniProtKB-KW"/>
</dbReference>
<dbReference type="GO" id="GO:0019843">
    <property type="term" value="F:rRNA binding"/>
    <property type="evidence" value="ECO:0007669"/>
    <property type="project" value="UniProtKB-KW"/>
</dbReference>
<dbReference type="GO" id="GO:0003735">
    <property type="term" value="F:structural constituent of ribosome"/>
    <property type="evidence" value="ECO:0007669"/>
    <property type="project" value="InterPro"/>
</dbReference>
<dbReference type="GO" id="GO:0006412">
    <property type="term" value="P:translation"/>
    <property type="evidence" value="ECO:0007669"/>
    <property type="project" value="UniProtKB-UniRule"/>
</dbReference>
<dbReference type="Gene3D" id="4.10.830.30">
    <property type="entry name" value="Ribosomal protein L31"/>
    <property type="match status" value="1"/>
</dbReference>
<dbReference type="HAMAP" id="MF_00501">
    <property type="entry name" value="Ribosomal_bL31_1"/>
    <property type="match status" value="1"/>
</dbReference>
<dbReference type="InterPro" id="IPR034704">
    <property type="entry name" value="Ribosomal_bL28/bL31-like_sf"/>
</dbReference>
<dbReference type="InterPro" id="IPR002150">
    <property type="entry name" value="Ribosomal_bL31"/>
</dbReference>
<dbReference type="InterPro" id="IPR027491">
    <property type="entry name" value="Ribosomal_bL31_A"/>
</dbReference>
<dbReference type="InterPro" id="IPR042105">
    <property type="entry name" value="Ribosomal_bL31_sf"/>
</dbReference>
<dbReference type="NCBIfam" id="TIGR00105">
    <property type="entry name" value="L31"/>
    <property type="match status" value="1"/>
</dbReference>
<dbReference type="NCBIfam" id="NF000612">
    <property type="entry name" value="PRK00019.1"/>
    <property type="match status" value="1"/>
</dbReference>
<dbReference type="NCBIfam" id="NF001809">
    <property type="entry name" value="PRK00528.1"/>
    <property type="match status" value="1"/>
</dbReference>
<dbReference type="PANTHER" id="PTHR33280">
    <property type="entry name" value="50S RIBOSOMAL PROTEIN L31, CHLOROPLASTIC"/>
    <property type="match status" value="1"/>
</dbReference>
<dbReference type="PANTHER" id="PTHR33280:SF6">
    <property type="entry name" value="LARGE RIBOSOMAL SUBUNIT PROTEIN BL31A"/>
    <property type="match status" value="1"/>
</dbReference>
<dbReference type="Pfam" id="PF01197">
    <property type="entry name" value="Ribosomal_L31"/>
    <property type="match status" value="1"/>
</dbReference>
<dbReference type="PRINTS" id="PR01249">
    <property type="entry name" value="RIBOSOMALL31"/>
</dbReference>
<dbReference type="SUPFAM" id="SSF143800">
    <property type="entry name" value="L28p-like"/>
    <property type="match status" value="1"/>
</dbReference>
<dbReference type="PROSITE" id="PS01143">
    <property type="entry name" value="RIBOSOMAL_L31"/>
    <property type="match status" value="1"/>
</dbReference>
<gene>
    <name evidence="1" type="primary">rpmE</name>
    <name type="ordered locus">Ppro_2650</name>
</gene>
<keyword id="KW-0479">Metal-binding</keyword>
<keyword id="KW-1185">Reference proteome</keyword>
<keyword id="KW-0687">Ribonucleoprotein</keyword>
<keyword id="KW-0689">Ribosomal protein</keyword>
<keyword id="KW-0694">RNA-binding</keyword>
<keyword id="KW-0699">rRNA-binding</keyword>
<keyword id="KW-0862">Zinc</keyword>
<accession>A1ASD4</accession>
<sequence length="66" mass="7586">MKEGIHPMYSDATVKCLCGNTFQTRSTRKEINTEICSACHPFFTGKQKLIDTAGRVERFKRRYGQV</sequence>